<evidence type="ECO:0000255" key="1">
    <source>
        <dbReference type="HAMAP-Rule" id="MF_01343"/>
    </source>
</evidence>
<evidence type="ECO:0000256" key="2">
    <source>
        <dbReference type="SAM" id="MobiDB-lite"/>
    </source>
</evidence>
<evidence type="ECO:0000305" key="3"/>
<organism>
    <name type="scientific">Methanosarcina barkeri (strain Fusaro / DSM 804)</name>
    <dbReference type="NCBI Taxonomy" id="269797"/>
    <lineage>
        <taxon>Archaea</taxon>
        <taxon>Methanobacteriati</taxon>
        <taxon>Methanobacteriota</taxon>
        <taxon>Stenosarchaea group</taxon>
        <taxon>Methanomicrobia</taxon>
        <taxon>Methanosarcinales</taxon>
        <taxon>Methanosarcinaceae</taxon>
        <taxon>Methanosarcina</taxon>
    </lineage>
</organism>
<keyword id="KW-0687">Ribonucleoprotein</keyword>
<keyword id="KW-0689">Ribosomal protein</keyword>
<feature type="chain" id="PRO_0000115610" description="Small ribosomal subunit protein uS15">
    <location>
        <begin position="1"/>
        <end position="152"/>
    </location>
</feature>
<feature type="region of interest" description="Disordered" evidence="2">
    <location>
        <begin position="1"/>
        <end position="22"/>
    </location>
</feature>
<feature type="compositionally biased region" description="Basic residues" evidence="2">
    <location>
        <begin position="1"/>
        <end position="11"/>
    </location>
</feature>
<gene>
    <name evidence="1" type="primary">rps15</name>
    <name type="ordered locus">Mbar_A1873</name>
</gene>
<dbReference type="EMBL" id="CP000099">
    <property type="protein sequence ID" value="AAZ70813.1"/>
    <property type="molecule type" value="Genomic_DNA"/>
</dbReference>
<dbReference type="SMR" id="Q46BC9"/>
<dbReference type="STRING" id="269797.Mbar_A1873"/>
<dbReference type="PaxDb" id="269797-Mbar_A1873"/>
<dbReference type="KEGG" id="mba:Mbar_A1873"/>
<dbReference type="eggNOG" id="arCOG04185">
    <property type="taxonomic scope" value="Archaea"/>
</dbReference>
<dbReference type="HOGENOM" id="CLU_090139_2_0_2"/>
<dbReference type="OrthoDB" id="6533at2157"/>
<dbReference type="GO" id="GO:0022627">
    <property type="term" value="C:cytosolic small ribosomal subunit"/>
    <property type="evidence" value="ECO:0007669"/>
    <property type="project" value="TreeGrafter"/>
</dbReference>
<dbReference type="GO" id="GO:0070181">
    <property type="term" value="F:small ribosomal subunit rRNA binding"/>
    <property type="evidence" value="ECO:0007669"/>
    <property type="project" value="TreeGrafter"/>
</dbReference>
<dbReference type="GO" id="GO:0003735">
    <property type="term" value="F:structural constituent of ribosome"/>
    <property type="evidence" value="ECO:0007669"/>
    <property type="project" value="InterPro"/>
</dbReference>
<dbReference type="GO" id="GO:0006412">
    <property type="term" value="P:translation"/>
    <property type="evidence" value="ECO:0007669"/>
    <property type="project" value="UniProtKB-UniRule"/>
</dbReference>
<dbReference type="CDD" id="cd00353">
    <property type="entry name" value="Ribosomal_S15p_S13e"/>
    <property type="match status" value="1"/>
</dbReference>
<dbReference type="FunFam" id="1.10.287.10:FF:000003">
    <property type="entry name" value="40S ribosomal protein S13"/>
    <property type="match status" value="1"/>
</dbReference>
<dbReference type="Gene3D" id="4.10.860.130">
    <property type="match status" value="1"/>
</dbReference>
<dbReference type="Gene3D" id="1.10.287.10">
    <property type="entry name" value="S15/NS1, RNA-binding"/>
    <property type="match status" value="1"/>
</dbReference>
<dbReference type="HAMAP" id="MF_01343_A">
    <property type="entry name" value="Ribosomal_uS15_A"/>
    <property type="match status" value="1"/>
</dbReference>
<dbReference type="InterPro" id="IPR000589">
    <property type="entry name" value="Ribosomal_uS15"/>
</dbReference>
<dbReference type="InterPro" id="IPR023029">
    <property type="entry name" value="Ribosomal_uS15_arc_euk"/>
</dbReference>
<dbReference type="InterPro" id="IPR012606">
    <property type="entry name" value="Ribosomal_uS15_N"/>
</dbReference>
<dbReference type="InterPro" id="IPR009068">
    <property type="entry name" value="uS15_NS1_RNA-bd_sf"/>
</dbReference>
<dbReference type="NCBIfam" id="NF006331">
    <property type="entry name" value="PRK08561.1"/>
    <property type="match status" value="1"/>
</dbReference>
<dbReference type="PANTHER" id="PTHR11885">
    <property type="entry name" value="RIBOSOMAL PROTEIN S15P/S13E"/>
    <property type="match status" value="1"/>
</dbReference>
<dbReference type="PANTHER" id="PTHR11885:SF6">
    <property type="entry name" value="SMALL RIBOSOMAL SUBUNIT PROTEIN US15"/>
    <property type="match status" value="1"/>
</dbReference>
<dbReference type="Pfam" id="PF08069">
    <property type="entry name" value="Ribosomal_S13_N"/>
    <property type="match status" value="1"/>
</dbReference>
<dbReference type="Pfam" id="PF00312">
    <property type="entry name" value="Ribosomal_S15"/>
    <property type="match status" value="1"/>
</dbReference>
<dbReference type="SMART" id="SM01386">
    <property type="entry name" value="Ribosomal_S13_N"/>
    <property type="match status" value="1"/>
</dbReference>
<dbReference type="SMART" id="SM01387">
    <property type="entry name" value="Ribosomal_S15"/>
    <property type="match status" value="1"/>
</dbReference>
<dbReference type="SUPFAM" id="SSF47060">
    <property type="entry name" value="S15/NS1 RNA-binding domain"/>
    <property type="match status" value="1"/>
</dbReference>
<dbReference type="PROSITE" id="PS00362">
    <property type="entry name" value="RIBOSOMAL_S15"/>
    <property type="match status" value="1"/>
</dbReference>
<protein>
    <recommendedName>
        <fullName evidence="1">Small ribosomal subunit protein uS15</fullName>
    </recommendedName>
    <alternativeName>
        <fullName evidence="3">30S ribosomal protein S15</fullName>
    </alternativeName>
</protein>
<comment type="subunit">
    <text evidence="1">Part of the 30S ribosomal subunit.</text>
</comment>
<comment type="similarity">
    <text evidence="1">Belongs to the universal ribosomal protein uS15 family.</text>
</comment>
<reference key="1">
    <citation type="journal article" date="2006" name="J. Bacteriol.">
        <title>The Methanosarcina barkeri genome: comparative analysis with Methanosarcina acetivorans and Methanosarcina mazei reveals extensive rearrangement within methanosarcinal genomes.</title>
        <authorList>
            <person name="Maeder D.L."/>
            <person name="Anderson I."/>
            <person name="Brettin T.S."/>
            <person name="Bruce D.C."/>
            <person name="Gilna P."/>
            <person name="Han C.S."/>
            <person name="Lapidus A."/>
            <person name="Metcalf W.W."/>
            <person name="Saunders E."/>
            <person name="Tapia R."/>
            <person name="Sowers K.R."/>
        </authorList>
    </citation>
    <scope>NUCLEOTIDE SEQUENCE [LARGE SCALE GENOMIC DNA]</scope>
    <source>
        <strain>Fusaro / DSM 804</strain>
    </source>
</reference>
<proteinExistence type="inferred from homology"/>
<accession>Q46BC9</accession>
<sequence>MAKMHTKRKGKSSSTRPIRTEPPEWCKIGAEEVTTITLDLWKQGVSTAEIGMTLRDRYGVPDAKLITGKKITTILKENNVYPNVPEDLTNLIVKALRLRKHLSVNKKDVHNKRALNLTESKIRRLVKYYQQEKVLPRDWFYKPETAEMMITR</sequence>
<name>RS15_METBF</name>